<sequence>MPLLVEGRRVRLPQSAGDLVRAHPPLEERARLLRGQSVQQVGPQGLLYVQQRELAVTSPKDGSVCILGSDDATTCHIVVLRHTGNGATCLTHCDGTDTKAEVSLIMSSIKSFSDHTQRGRLEVHLVGGFSDDRQLSQKLTHQLLSEFDRQEDDIHLVTLCVTELNDREENENHFPIIYGIAVNVKTAEIYRASFPDRGPEEELRAARVLTGGPMISIYDAKTEQLRIGPYSWMPFPHVDFWLQQDDKQILENLSTSPLAEPPHFVEHIRSTLMFLKKYPSPTNTLFPGNKALLYKKNEDGLWKEISSGGET</sequence>
<accession>Q28955</accession>
<accession>A0A286ZPV6</accession>
<evidence type="ECO:0000269" key="1">
    <source>
    </source>
</evidence>
<evidence type="ECO:0000269" key="2">
    <source>
    </source>
</evidence>
<evidence type="ECO:0000305" key="3">
    <source>
    </source>
</evidence>
<protein>
    <recommendedName>
        <fullName>Protein N-terminal asparagine amidohydrolase</fullName>
        <ecNumber evidence="2">3.5.1.121</ecNumber>
    </recommendedName>
    <alternativeName>
        <fullName>Protein NH2-terminal asparagine amidohydrolase</fullName>
        <shortName>PNAA</shortName>
    </alternativeName>
    <alternativeName>
        <fullName>Protein NH2-terminal asparagine deamidase</fullName>
        <shortName>PNAD</shortName>
        <shortName>Protein N-terminal Asn amidase</shortName>
        <shortName>Protein NTN-amidase</shortName>
    </alternativeName>
</protein>
<organism>
    <name type="scientific">Sus scrofa</name>
    <name type="common">Pig</name>
    <dbReference type="NCBI Taxonomy" id="9823"/>
    <lineage>
        <taxon>Eukaryota</taxon>
        <taxon>Metazoa</taxon>
        <taxon>Chordata</taxon>
        <taxon>Craniata</taxon>
        <taxon>Vertebrata</taxon>
        <taxon>Euteleostomi</taxon>
        <taxon>Mammalia</taxon>
        <taxon>Eutheria</taxon>
        <taxon>Laurasiatheria</taxon>
        <taxon>Artiodactyla</taxon>
        <taxon>Suina</taxon>
        <taxon>Suidae</taxon>
        <taxon>Sus</taxon>
    </lineage>
</organism>
<comment type="function">
    <text evidence="2">N-terminal asparagine deamidase that mediates deamidation of N-terminal asparagine residues to aspartate. Required for the ubiquitin-dependent turnover of intracellular proteins that initiate with Met-Asn. These proteins are acetylated on the retained initiator methionine and can subsequently be modified by the removal of N-acetyl methionine by acylaminoacid hydrolase (AAH). Conversion of the resulting N-terminal asparagine to aspartate by NTAN1/PNAD renders the protein susceptible to arginylation, polyubiquitination and degradation as specified by the N-end rule. This enzyme does not act on substrates with internal or C-terminal asparagines and does not act on glutamine residues in any position.</text>
</comment>
<comment type="catalytic activity">
    <reaction evidence="2">
        <text>N-terminal L-asparaginyl-[protein] + H2O + H(+) = N-terminal L-aspartyl-[protein] + NH4(+)</text>
        <dbReference type="Rhea" id="RHEA:50676"/>
        <dbReference type="Rhea" id="RHEA-COMP:12669"/>
        <dbReference type="Rhea" id="RHEA-COMP:12776"/>
        <dbReference type="ChEBI" id="CHEBI:15377"/>
        <dbReference type="ChEBI" id="CHEBI:15378"/>
        <dbReference type="ChEBI" id="CHEBI:28938"/>
        <dbReference type="ChEBI" id="CHEBI:50348"/>
        <dbReference type="ChEBI" id="CHEBI:64720"/>
        <dbReference type="EC" id="3.5.1.121"/>
    </reaction>
</comment>
<comment type="biophysicochemical properties">
    <kinetics>
        <KM evidence="2">0.265 mM for NHGSGAWL peptide</KM>
        <KM evidence="2">0.325 mM for NAGVELEG peptide</KM>
        <KM evidence="2">0.291 mM for NHGVELEG peptide</KM>
        <KM evidence="2">0.21 mM for NRVYVHPFL peptide</KM>
        <KM evidence="2">0.604 mM for NV peptide</KM>
        <KM evidence="2">0.601 mM for NA peptide</KM>
        <text evidence="2">kcat is 554 sec(-1) with NHGSGAWL as substrate. kcat is 457 sec(-1) with NAGVELEG as substrate. kcat is 470 sec(-1) with NHGVELEG as substrate. kcat is 598 sec(-1) with NRVYVHPFL as substrate. kcat is 398 sec(-1) with NV as substrate. kcat is 354 sec(-1) with NA as substrate.</text>
    </kinetics>
</comment>
<comment type="subunit">
    <text evidence="2">Monomer.</text>
</comment>
<comment type="subcellular location">
    <subcellularLocation>
        <location evidence="3">Cytoplasm</location>
    </subcellularLocation>
</comment>
<keyword id="KW-0963">Cytoplasm</keyword>
<keyword id="KW-0903">Direct protein sequencing</keyword>
<keyword id="KW-0378">Hydrolase</keyword>
<keyword id="KW-1185">Reference proteome</keyword>
<feature type="initiator methionine" description="Removed" evidence="1">
    <location>
        <position position="1"/>
    </location>
</feature>
<feature type="chain" id="PRO_0000057973" description="Protein N-terminal asparagine amidohydrolase">
    <location>
        <begin position="2"/>
        <end position="311"/>
    </location>
</feature>
<feature type="sequence conflict" description="In Ref. 1; AAA65019." ref="1">
    <original>E</original>
    <variation>G</variation>
    <location>
        <position position="122"/>
    </location>
</feature>
<feature type="sequence conflict" description="In Ref. 1; AAA65019." ref="1">
    <original>L</original>
    <variation>V</variation>
    <location>
        <position position="293"/>
    </location>
</feature>
<feature type="sequence conflict" description="In Ref. 1; AAA65019." ref="1">
    <original>G</original>
    <variation>A</variation>
    <location>
        <position position="300"/>
    </location>
</feature>
<feature type="sequence conflict" description="In Ref. 1; AAA65019." ref="1">
    <location>
        <position position="309"/>
    </location>
</feature>
<name>NTAN1_PIG</name>
<proteinExistence type="evidence at protein level"/>
<gene>
    <name type="primary">NTAN1</name>
</gene>
<reference key="1">
    <citation type="journal article" date="1995" name="J. Biol. Chem.">
        <title>The sequence of porcine protein NH2-terminal asparagine amidohydrolase. A new component of the N-end Rule pathway.</title>
        <authorList>
            <person name="Stewart A.E."/>
            <person name="Arfin S.M."/>
            <person name="Bradshaw R.A."/>
        </authorList>
    </citation>
    <scope>NUCLEOTIDE SEQUENCE [MRNA]</scope>
    <scope>PROTEIN SEQUENCE OF 2-18; 107-119; 215-228 AND 234-249</scope>
    <source>
        <tissue>Liver</tissue>
    </source>
</reference>
<reference key="2">
    <citation type="submission" date="2009-11" db="EMBL/GenBank/DDBJ databases">
        <authorList>
            <consortium name="Porcine genome sequencing project"/>
        </authorList>
    </citation>
    <scope>NUCLEOTIDE SEQUENCE [LARGE SCALE GENOMIC DNA]</scope>
    <source>
        <strain>Duroc</strain>
    </source>
</reference>
<reference key="3">
    <citation type="journal article" date="1994" name="J. Biol. Chem.">
        <title>Protein NH2-terminal asparagine deamidase. Isolation and characterization of a new enzyme.</title>
        <authorList>
            <person name="Stewart A.E."/>
            <person name="Arfin S.M."/>
            <person name="Bradshaw R.A."/>
        </authorList>
    </citation>
    <scope>FUNCTION</scope>
    <scope>CATALYTIC ACTIVITY</scope>
    <scope>BIOPHYSICOCHEMICAL PROPERTIES</scope>
    <source>
        <tissue>Liver</tissue>
    </source>
</reference>
<dbReference type="EC" id="3.5.1.121" evidence="2"/>
<dbReference type="EMBL" id="U17062">
    <property type="protein sequence ID" value="AAA65019.1"/>
    <property type="molecule type" value="mRNA"/>
</dbReference>
<dbReference type="EMBL" id="AEMK02000014">
    <property type="status" value="NOT_ANNOTATED_CDS"/>
    <property type="molecule type" value="Genomic_DNA"/>
</dbReference>
<dbReference type="PIR" id="A55768">
    <property type="entry name" value="A55768"/>
</dbReference>
<dbReference type="RefSeq" id="NP_999207.1">
    <property type="nucleotide sequence ID" value="NM_214042.1"/>
</dbReference>
<dbReference type="SMR" id="Q28955"/>
<dbReference type="FunCoup" id="Q28955">
    <property type="interactions" value="2823"/>
</dbReference>
<dbReference type="STRING" id="9823.ENSSSCP00000033644"/>
<dbReference type="PeptideAtlas" id="Q28955"/>
<dbReference type="Ensembl" id="ENSSSCT00000042357.3">
    <property type="protein sequence ID" value="ENSSSCP00000033644.2"/>
    <property type="gene ID" value="ENSSSCG00000037398.3"/>
</dbReference>
<dbReference type="Ensembl" id="ENSSSCT00035086018.1">
    <property type="protein sequence ID" value="ENSSSCP00035035808.1"/>
    <property type="gene ID" value="ENSSSCG00035063955.1"/>
</dbReference>
<dbReference type="Ensembl" id="ENSSSCT00040080708.1">
    <property type="protein sequence ID" value="ENSSSCP00040034961.1"/>
    <property type="gene ID" value="ENSSSCG00040059367.1"/>
</dbReference>
<dbReference type="Ensembl" id="ENSSSCT00090032947">
    <property type="protein sequence ID" value="ENSSSCP00090020385"/>
    <property type="gene ID" value="ENSSSCG00090018685"/>
</dbReference>
<dbReference type="Ensembl" id="ENSSSCT00105057176">
    <property type="protein sequence ID" value="ENSSSCP00105040284"/>
    <property type="gene ID" value="ENSSSCG00105030087"/>
</dbReference>
<dbReference type="Ensembl" id="ENSSSCT00110076274">
    <property type="protein sequence ID" value="ENSSSCP00110053872"/>
    <property type="gene ID" value="ENSSSCG00110039922"/>
</dbReference>
<dbReference type="Ensembl" id="ENSSSCT00115026995">
    <property type="protein sequence ID" value="ENSSSCP00115025582"/>
    <property type="gene ID" value="ENSSSCG00115015495"/>
</dbReference>
<dbReference type="Ensembl" id="ENSSSCT00130027748">
    <property type="protein sequence ID" value="ENSSSCP00130018942"/>
    <property type="gene ID" value="ENSSSCG00130013981"/>
</dbReference>
<dbReference type="GeneID" id="397107"/>
<dbReference type="KEGG" id="ssc:397107"/>
<dbReference type="CTD" id="123803"/>
<dbReference type="VGNC" id="VGNC:90927">
    <property type="gene designation" value="NTAN1"/>
</dbReference>
<dbReference type="GeneTree" id="ENSGT00390000016730"/>
<dbReference type="InParanoid" id="Q28955"/>
<dbReference type="OrthoDB" id="539995at2759"/>
<dbReference type="Proteomes" id="UP000008227">
    <property type="component" value="Chromosome 3"/>
</dbReference>
<dbReference type="Proteomes" id="UP000314985">
    <property type="component" value="Unplaced"/>
</dbReference>
<dbReference type="Proteomes" id="UP000694570">
    <property type="component" value="Unplaced"/>
</dbReference>
<dbReference type="Proteomes" id="UP000694571">
    <property type="component" value="Unplaced"/>
</dbReference>
<dbReference type="Proteomes" id="UP000694720">
    <property type="component" value="Unplaced"/>
</dbReference>
<dbReference type="Proteomes" id="UP000694722">
    <property type="component" value="Unplaced"/>
</dbReference>
<dbReference type="Proteomes" id="UP000694723">
    <property type="component" value="Unplaced"/>
</dbReference>
<dbReference type="Proteomes" id="UP000694724">
    <property type="component" value="Unplaced"/>
</dbReference>
<dbReference type="Proteomes" id="UP000694725">
    <property type="component" value="Unplaced"/>
</dbReference>
<dbReference type="Proteomes" id="UP000694726">
    <property type="component" value="Unplaced"/>
</dbReference>
<dbReference type="Proteomes" id="UP000694727">
    <property type="component" value="Unplaced"/>
</dbReference>
<dbReference type="Proteomes" id="UP000694728">
    <property type="component" value="Unplaced"/>
</dbReference>
<dbReference type="GO" id="GO:0005737">
    <property type="term" value="C:cytoplasm"/>
    <property type="evidence" value="ECO:0007669"/>
    <property type="project" value="UniProtKB-SubCell"/>
</dbReference>
<dbReference type="GO" id="GO:0005634">
    <property type="term" value="C:nucleus"/>
    <property type="evidence" value="ECO:0007669"/>
    <property type="project" value="Ensembl"/>
</dbReference>
<dbReference type="GO" id="GO:0008418">
    <property type="term" value="F:protein-N-terminal asparagine amidohydrolase activity"/>
    <property type="evidence" value="ECO:0007669"/>
    <property type="project" value="UniProtKB-EC"/>
</dbReference>
<dbReference type="GO" id="GO:0008344">
    <property type="term" value="P:adult locomotory behavior"/>
    <property type="evidence" value="ECO:0007669"/>
    <property type="project" value="Ensembl"/>
</dbReference>
<dbReference type="GO" id="GO:0007613">
    <property type="term" value="P:memory"/>
    <property type="evidence" value="ECO:0007669"/>
    <property type="project" value="Ensembl"/>
</dbReference>
<dbReference type="GO" id="GO:0006511">
    <property type="term" value="P:ubiquitin-dependent protein catabolic process"/>
    <property type="evidence" value="ECO:0007669"/>
    <property type="project" value="Ensembl"/>
</dbReference>
<dbReference type="InterPro" id="IPR026750">
    <property type="entry name" value="NTAN1"/>
</dbReference>
<dbReference type="PANTHER" id="PTHR12498">
    <property type="entry name" value="N-TERMINAL ASPARAGINE AMIDOHYDROLASE"/>
    <property type="match status" value="1"/>
</dbReference>
<dbReference type="PANTHER" id="PTHR12498:SF0">
    <property type="entry name" value="PROTEIN N-TERMINAL ASPARAGINE AMIDOHYDROLASE"/>
    <property type="match status" value="1"/>
</dbReference>
<dbReference type="Pfam" id="PF14736">
    <property type="entry name" value="N_Asn_amidohyd"/>
    <property type="match status" value="1"/>
</dbReference>